<gene>
    <name evidence="1" type="primary">gyrB</name>
    <name type="ordered locus">jhp_0453</name>
</gene>
<dbReference type="EC" id="5.6.2.2" evidence="1"/>
<dbReference type="EMBL" id="AE001439">
    <property type="protein sequence ID" value="AAD06031.1"/>
    <property type="molecule type" value="Genomic_DNA"/>
</dbReference>
<dbReference type="PIR" id="B71931">
    <property type="entry name" value="B71931"/>
</dbReference>
<dbReference type="RefSeq" id="WP_001182034.1">
    <property type="nucleotide sequence ID" value="NC_000921.1"/>
</dbReference>
<dbReference type="SMR" id="Q9ZLX3"/>
<dbReference type="KEGG" id="hpj:jhp_0453"/>
<dbReference type="PATRIC" id="fig|85963.30.peg.551"/>
<dbReference type="eggNOG" id="COG0187">
    <property type="taxonomic scope" value="Bacteria"/>
</dbReference>
<dbReference type="Proteomes" id="UP000000804">
    <property type="component" value="Chromosome"/>
</dbReference>
<dbReference type="GO" id="GO:0005694">
    <property type="term" value="C:chromosome"/>
    <property type="evidence" value="ECO:0007669"/>
    <property type="project" value="InterPro"/>
</dbReference>
<dbReference type="GO" id="GO:0005737">
    <property type="term" value="C:cytoplasm"/>
    <property type="evidence" value="ECO:0007669"/>
    <property type="project" value="UniProtKB-SubCell"/>
</dbReference>
<dbReference type="GO" id="GO:0005524">
    <property type="term" value="F:ATP binding"/>
    <property type="evidence" value="ECO:0007669"/>
    <property type="project" value="UniProtKB-UniRule"/>
</dbReference>
<dbReference type="GO" id="GO:0003677">
    <property type="term" value="F:DNA binding"/>
    <property type="evidence" value="ECO:0007669"/>
    <property type="project" value="UniProtKB-KW"/>
</dbReference>
<dbReference type="GO" id="GO:0003918">
    <property type="term" value="F:DNA topoisomerase type II (double strand cut, ATP-hydrolyzing) activity"/>
    <property type="evidence" value="ECO:0007669"/>
    <property type="project" value="UniProtKB-UniRule"/>
</dbReference>
<dbReference type="GO" id="GO:0046872">
    <property type="term" value="F:metal ion binding"/>
    <property type="evidence" value="ECO:0007669"/>
    <property type="project" value="UniProtKB-KW"/>
</dbReference>
<dbReference type="GO" id="GO:0006265">
    <property type="term" value="P:DNA topological change"/>
    <property type="evidence" value="ECO:0007669"/>
    <property type="project" value="UniProtKB-UniRule"/>
</dbReference>
<dbReference type="GO" id="GO:0006261">
    <property type="term" value="P:DNA-templated DNA replication"/>
    <property type="evidence" value="ECO:0007669"/>
    <property type="project" value="UniProtKB-UniRule"/>
</dbReference>
<dbReference type="CDD" id="cd16928">
    <property type="entry name" value="HATPase_GyrB-like"/>
    <property type="match status" value="1"/>
</dbReference>
<dbReference type="CDD" id="cd00822">
    <property type="entry name" value="TopoII_Trans_DNA_gyrase"/>
    <property type="match status" value="1"/>
</dbReference>
<dbReference type="CDD" id="cd03366">
    <property type="entry name" value="TOPRIM_TopoIIA_GyrB"/>
    <property type="match status" value="1"/>
</dbReference>
<dbReference type="FunFam" id="3.30.565.10:FF:000002">
    <property type="entry name" value="DNA gyrase subunit B"/>
    <property type="match status" value="1"/>
</dbReference>
<dbReference type="FunFam" id="3.40.50.670:FF:000012">
    <property type="entry name" value="DNA gyrase subunit B"/>
    <property type="match status" value="1"/>
</dbReference>
<dbReference type="FunFam" id="3.40.50.670:FF:000013">
    <property type="entry name" value="DNA gyrase subunit B"/>
    <property type="match status" value="1"/>
</dbReference>
<dbReference type="Gene3D" id="3.30.230.10">
    <property type="match status" value="1"/>
</dbReference>
<dbReference type="Gene3D" id="3.40.50.670">
    <property type="match status" value="2"/>
</dbReference>
<dbReference type="Gene3D" id="3.30.565.10">
    <property type="entry name" value="Histidine kinase-like ATPase, C-terminal domain"/>
    <property type="match status" value="1"/>
</dbReference>
<dbReference type="HAMAP" id="MF_01898">
    <property type="entry name" value="GyrB"/>
    <property type="match status" value="1"/>
</dbReference>
<dbReference type="InterPro" id="IPR002288">
    <property type="entry name" value="DNA_gyrase_B_C"/>
</dbReference>
<dbReference type="InterPro" id="IPR011557">
    <property type="entry name" value="GyrB"/>
</dbReference>
<dbReference type="InterPro" id="IPR036890">
    <property type="entry name" value="HATPase_C_sf"/>
</dbReference>
<dbReference type="InterPro" id="IPR020568">
    <property type="entry name" value="Ribosomal_Su5_D2-typ_SF"/>
</dbReference>
<dbReference type="InterPro" id="IPR014721">
    <property type="entry name" value="Ribsml_uS5_D2-typ_fold_subgr"/>
</dbReference>
<dbReference type="InterPro" id="IPR001241">
    <property type="entry name" value="Topo_IIA"/>
</dbReference>
<dbReference type="InterPro" id="IPR013760">
    <property type="entry name" value="Topo_IIA-like_dom_sf"/>
</dbReference>
<dbReference type="InterPro" id="IPR000565">
    <property type="entry name" value="Topo_IIA_B"/>
</dbReference>
<dbReference type="InterPro" id="IPR013759">
    <property type="entry name" value="Topo_IIA_B_C"/>
</dbReference>
<dbReference type="InterPro" id="IPR013506">
    <property type="entry name" value="Topo_IIA_bsu_dom2"/>
</dbReference>
<dbReference type="InterPro" id="IPR018522">
    <property type="entry name" value="TopoIIA_CS"/>
</dbReference>
<dbReference type="InterPro" id="IPR006171">
    <property type="entry name" value="TOPRIM_dom"/>
</dbReference>
<dbReference type="InterPro" id="IPR034160">
    <property type="entry name" value="TOPRIM_GyrB"/>
</dbReference>
<dbReference type="NCBIfam" id="TIGR01059">
    <property type="entry name" value="gyrB"/>
    <property type="match status" value="1"/>
</dbReference>
<dbReference type="NCBIfam" id="NF004189">
    <property type="entry name" value="PRK05644.1"/>
    <property type="match status" value="1"/>
</dbReference>
<dbReference type="NCBIfam" id="NF011501">
    <property type="entry name" value="PRK14939.1"/>
    <property type="match status" value="1"/>
</dbReference>
<dbReference type="PANTHER" id="PTHR45866:SF1">
    <property type="entry name" value="DNA GYRASE SUBUNIT B, MITOCHONDRIAL"/>
    <property type="match status" value="1"/>
</dbReference>
<dbReference type="PANTHER" id="PTHR45866">
    <property type="entry name" value="DNA GYRASE/TOPOISOMERASE SUBUNIT B"/>
    <property type="match status" value="1"/>
</dbReference>
<dbReference type="Pfam" id="PF00204">
    <property type="entry name" value="DNA_gyraseB"/>
    <property type="match status" value="1"/>
</dbReference>
<dbReference type="Pfam" id="PF00986">
    <property type="entry name" value="DNA_gyraseB_C"/>
    <property type="match status" value="1"/>
</dbReference>
<dbReference type="Pfam" id="PF02518">
    <property type="entry name" value="HATPase_c"/>
    <property type="match status" value="1"/>
</dbReference>
<dbReference type="Pfam" id="PF01751">
    <property type="entry name" value="Toprim"/>
    <property type="match status" value="1"/>
</dbReference>
<dbReference type="PRINTS" id="PR01159">
    <property type="entry name" value="DNAGYRASEB"/>
</dbReference>
<dbReference type="PRINTS" id="PR00418">
    <property type="entry name" value="TPI2FAMILY"/>
</dbReference>
<dbReference type="SMART" id="SM00387">
    <property type="entry name" value="HATPase_c"/>
    <property type="match status" value="1"/>
</dbReference>
<dbReference type="SMART" id="SM00433">
    <property type="entry name" value="TOP2c"/>
    <property type="match status" value="1"/>
</dbReference>
<dbReference type="SUPFAM" id="SSF55874">
    <property type="entry name" value="ATPase domain of HSP90 chaperone/DNA topoisomerase II/histidine kinase"/>
    <property type="match status" value="1"/>
</dbReference>
<dbReference type="SUPFAM" id="SSF54211">
    <property type="entry name" value="Ribosomal protein S5 domain 2-like"/>
    <property type="match status" value="1"/>
</dbReference>
<dbReference type="SUPFAM" id="SSF56719">
    <property type="entry name" value="Type II DNA topoisomerase"/>
    <property type="match status" value="1"/>
</dbReference>
<dbReference type="PROSITE" id="PS00177">
    <property type="entry name" value="TOPOISOMERASE_II"/>
    <property type="match status" value="1"/>
</dbReference>
<dbReference type="PROSITE" id="PS50880">
    <property type="entry name" value="TOPRIM"/>
    <property type="match status" value="1"/>
</dbReference>
<proteinExistence type="inferred from homology"/>
<comment type="function">
    <text evidence="1">A type II topoisomerase that negatively supercoils closed circular double-stranded (ds) DNA in an ATP-dependent manner to modulate DNA topology and maintain chromosomes in an underwound state. Negative supercoiling favors strand separation, and DNA replication, transcription, recombination and repair, all of which involve strand separation. Also able to catalyze the interconversion of other topological isomers of dsDNA rings, including catenanes and knotted rings. Type II topoisomerases break and join 2 DNA strands simultaneously in an ATP-dependent manner.</text>
</comment>
<comment type="catalytic activity">
    <reaction evidence="1">
        <text>ATP-dependent breakage, passage and rejoining of double-stranded DNA.</text>
        <dbReference type="EC" id="5.6.2.2"/>
    </reaction>
</comment>
<comment type="cofactor">
    <cofactor evidence="1">
        <name>Mg(2+)</name>
        <dbReference type="ChEBI" id="CHEBI:18420"/>
    </cofactor>
    <cofactor evidence="1">
        <name>Mn(2+)</name>
        <dbReference type="ChEBI" id="CHEBI:29035"/>
    </cofactor>
    <cofactor evidence="1">
        <name>Ca(2+)</name>
        <dbReference type="ChEBI" id="CHEBI:29108"/>
    </cofactor>
    <text evidence="1">Binds two Mg(2+) per subunit. The magnesium ions form salt bridges with both the protein and the DNA. Can also accept other divalent metal cations, such as Mn(2+) or Ca(2+).</text>
</comment>
<comment type="subunit">
    <text evidence="1">Heterotetramer, composed of two GyrA and two GyrB chains. In the heterotetramer, GyrA contains the active site tyrosine that forms a transient covalent intermediate with DNA, while GyrB binds cofactors and catalyzes ATP hydrolysis.</text>
</comment>
<comment type="subcellular location">
    <subcellularLocation>
        <location evidence="1">Cytoplasm</location>
    </subcellularLocation>
</comment>
<comment type="miscellaneous">
    <text evidence="1">Few gyrases are as efficient as E.coli at forming negative supercoils. Not all organisms have 2 type II topoisomerases; in organisms with a single type II topoisomerase this enzyme also has to decatenate newly replicated chromosomes.</text>
</comment>
<comment type="similarity">
    <text evidence="1">Belongs to the type II topoisomerase GyrB family.</text>
</comment>
<organism>
    <name type="scientific">Helicobacter pylori (strain J99 / ATCC 700824)</name>
    <name type="common">Campylobacter pylori J99</name>
    <dbReference type="NCBI Taxonomy" id="85963"/>
    <lineage>
        <taxon>Bacteria</taxon>
        <taxon>Pseudomonadati</taxon>
        <taxon>Campylobacterota</taxon>
        <taxon>Epsilonproteobacteria</taxon>
        <taxon>Campylobacterales</taxon>
        <taxon>Helicobacteraceae</taxon>
        <taxon>Helicobacter</taxon>
    </lineage>
</organism>
<protein>
    <recommendedName>
        <fullName evidence="1">DNA gyrase subunit B</fullName>
        <ecNumber evidence="1">5.6.2.2</ecNumber>
    </recommendedName>
</protein>
<accession>Q9ZLX3</accession>
<feature type="chain" id="PRO_0000145315" description="DNA gyrase subunit B">
    <location>
        <begin position="1"/>
        <end position="773"/>
    </location>
</feature>
<feature type="domain" description="Toprim" evidence="1">
    <location>
        <begin position="416"/>
        <end position="530"/>
    </location>
</feature>
<feature type="binding site" evidence="1">
    <location>
        <position position="422"/>
    </location>
    <ligand>
        <name>Mg(2+)</name>
        <dbReference type="ChEBI" id="CHEBI:18420"/>
        <label>1</label>
        <note>catalytic</note>
    </ligand>
</feature>
<feature type="binding site" evidence="1">
    <location>
        <position position="495"/>
    </location>
    <ligand>
        <name>Mg(2+)</name>
        <dbReference type="ChEBI" id="CHEBI:18420"/>
        <label>1</label>
        <note>catalytic</note>
    </ligand>
</feature>
<feature type="binding site" evidence="1">
    <location>
        <position position="495"/>
    </location>
    <ligand>
        <name>Mg(2+)</name>
        <dbReference type="ChEBI" id="CHEBI:18420"/>
        <label>2</label>
    </ligand>
</feature>
<feature type="binding site" evidence="1">
    <location>
        <position position="497"/>
    </location>
    <ligand>
        <name>Mg(2+)</name>
        <dbReference type="ChEBI" id="CHEBI:18420"/>
        <label>2</label>
    </ligand>
</feature>
<feature type="site" description="Interaction with DNA" evidence="1">
    <location>
        <position position="447"/>
    </location>
</feature>
<feature type="site" description="Interaction with DNA" evidence="1">
    <location>
        <position position="450"/>
    </location>
</feature>
<name>GYRB_HELPJ</name>
<reference key="1">
    <citation type="journal article" date="1999" name="Nature">
        <title>Genomic sequence comparison of two unrelated isolates of the human gastric pathogen Helicobacter pylori.</title>
        <authorList>
            <person name="Alm R.A."/>
            <person name="Ling L.-S.L."/>
            <person name="Moir D.T."/>
            <person name="King B.L."/>
            <person name="Brown E.D."/>
            <person name="Doig P.C."/>
            <person name="Smith D.R."/>
            <person name="Noonan B."/>
            <person name="Guild B.C."/>
            <person name="deJonge B.L."/>
            <person name="Carmel G."/>
            <person name="Tummino P.J."/>
            <person name="Caruso A."/>
            <person name="Uria-Nickelsen M."/>
            <person name="Mills D.M."/>
            <person name="Ives C."/>
            <person name="Gibson R."/>
            <person name="Merberg D."/>
            <person name="Mills S.D."/>
            <person name="Jiang Q."/>
            <person name="Taylor D.E."/>
            <person name="Vovis G.F."/>
            <person name="Trust T.J."/>
        </authorList>
    </citation>
    <scope>NUCLEOTIDE SEQUENCE [LARGE SCALE GENOMIC DNA]</scope>
    <source>
        <strain>J99 / ATCC 700824</strain>
    </source>
</reference>
<sequence>MQNYQSHSIKVLKGLEGVRKRPGMYIGDTNVGGLHHMVYEVVDNAVDESMAGFCDTINITLTEEGSCIVEDNGRGIPVDIHPTEKIPACTVVLTILHAGGKFDNDTYKVSGGLHGVGVSVVNALSKRLIMTIKKEGQIYRQEFEKGIPISELEIIGKTKSAKESGTTIEFFPDESVMEVVEFQAGILQKRFKEMAYLNDGLKISFKEEKTQLQETYFYKDGLKQFVKDSAKKELLTPIIAFKSMDEETRTSIEVALAYADDYNENTLSFVNNIKTSEGGTHEAGFKMGLSKAILQYIDNNIKTKESRPISEDIKEGLIAVVSLKMSEPLFEGQTKSKLGSSYARALVSKLVYDKIHQFLEENPNEAKIIANKALLAAKAREASKKARELTRKKDNLSVGTLPGKLADCQSKDPLESEIFLVEGDSAGGSAKQGRDRVFQAILPLKGKILNVEKSHLSKILKSEEIKNMITAFGCGIQESFDIERLRYHKIIIMTDADVDGSHIQTLLMTFFYRYLRPLIEQGHVFIAQAPLYKYKKGKTEIYLKDSVALDHFLIEHGINSVDIEGIGKNDLMNLLKVARHYRYTLLELEKRYNLLEVLRFLIETKDALSLDMKVLEKSILEKLEGLNYQILRSFATEESLHLHAQTPKGLVEFNLDDNLFKDVLFEEAHYTYQKLMEYNLDFLENKDILAFLEEVENYAKKGANIQRYKGLGEMNPNDLWETTMHKENRSLIKLKIEDLEKTDAVFSLCMGDEVEPRRAFIQAHAKDVKQLDV</sequence>
<keyword id="KW-0067">ATP-binding</keyword>
<keyword id="KW-0963">Cytoplasm</keyword>
<keyword id="KW-0238">DNA-binding</keyword>
<keyword id="KW-0413">Isomerase</keyword>
<keyword id="KW-0460">Magnesium</keyword>
<keyword id="KW-0479">Metal-binding</keyword>
<keyword id="KW-0547">Nucleotide-binding</keyword>
<keyword id="KW-0799">Topoisomerase</keyword>
<evidence type="ECO:0000255" key="1">
    <source>
        <dbReference type="HAMAP-Rule" id="MF_01898"/>
    </source>
</evidence>